<protein>
    <recommendedName>
        <fullName>Bifunctional 3'-phosphoadenosine 5'-phosphosulfate synthase 1</fullName>
        <shortName>PAPS synthase 1</shortName>
        <shortName>PAPSS 1</shortName>
    </recommendedName>
    <alternativeName>
        <fullName>Sulfurylase kinase 1</fullName>
        <shortName>SK 1</shortName>
        <shortName>SK1</shortName>
    </alternativeName>
    <domain>
        <recommendedName>
            <fullName>Sulfate adenylyltransferase</fullName>
            <ecNumber evidence="3 7 8 9">2.7.7.4</ecNumber>
        </recommendedName>
        <alternativeName>
            <fullName>ATP-sulfurylase</fullName>
        </alternativeName>
        <alternativeName>
            <fullName>Sulfate adenylate transferase</fullName>
            <shortName>SAT</shortName>
        </alternativeName>
    </domain>
    <domain>
        <recommendedName>
            <fullName>Adenylyl-sulfate kinase</fullName>
            <ecNumber evidence="3 5 6 7 8 9">2.7.1.25</ecNumber>
        </recommendedName>
        <alternativeName>
            <fullName>3'-phosphoadenosine-5'-phosphosulfate synthase</fullName>
        </alternativeName>
        <alternativeName>
            <fullName>APS kinase</fullName>
        </alternativeName>
        <alternativeName>
            <fullName>Adenosine-5'-phosphosulfate 3'-phosphotransferase</fullName>
        </alternativeName>
        <alternativeName>
            <fullName>Adenylylsulfate 3'-phosphotransferase</fullName>
        </alternativeName>
    </domain>
</protein>
<proteinExistence type="evidence at protein level"/>
<keyword id="KW-0002">3D-structure</keyword>
<keyword id="KW-0007">Acetylation</keyword>
<keyword id="KW-0067">ATP-binding</keyword>
<keyword id="KW-0418">Kinase</keyword>
<keyword id="KW-0511">Multifunctional enzyme</keyword>
<keyword id="KW-0547">Nucleotide-binding</keyword>
<keyword id="KW-0548">Nucleotidyltransferase</keyword>
<keyword id="KW-1267">Proteomics identification</keyword>
<keyword id="KW-1185">Reference proteome</keyword>
<keyword id="KW-0808">Transferase</keyword>
<evidence type="ECO:0000250" key="1">
    <source>
        <dbReference type="UniProtKB" id="Q60967"/>
    </source>
</evidence>
<evidence type="ECO:0000269" key="2">
    <source>
    </source>
</evidence>
<evidence type="ECO:0000269" key="3">
    <source>
    </source>
</evidence>
<evidence type="ECO:0000269" key="4">
    <source>
    </source>
</evidence>
<evidence type="ECO:0000269" key="5">
    <source>
    </source>
</evidence>
<evidence type="ECO:0000269" key="6">
    <source>
    </source>
</evidence>
<evidence type="ECO:0000269" key="7">
    <source>
    </source>
</evidence>
<evidence type="ECO:0000269" key="8">
    <source>
    </source>
</evidence>
<evidence type="ECO:0000269" key="9">
    <source>
    </source>
</evidence>
<evidence type="ECO:0000269" key="10">
    <source>
    </source>
</evidence>
<evidence type="ECO:0000269" key="11">
    <source ref="4"/>
</evidence>
<evidence type="ECO:0000305" key="12"/>
<evidence type="ECO:0000305" key="13">
    <source>
    </source>
</evidence>
<evidence type="ECO:0000305" key="14">
    <source>
    </source>
</evidence>
<evidence type="ECO:0000305" key="15">
    <source>
    </source>
</evidence>
<evidence type="ECO:0000312" key="16">
    <source>
        <dbReference type="EMBL" id="BAF85463.1"/>
    </source>
</evidence>
<evidence type="ECO:0007744" key="17">
    <source>
        <dbReference type="PDB" id="1X6V"/>
    </source>
</evidence>
<evidence type="ECO:0007744" key="18">
    <source>
        <dbReference type="PDB" id="1XJQ"/>
    </source>
</evidence>
<evidence type="ECO:0007744" key="19">
    <source>
        <dbReference type="PDB" id="1XNJ"/>
    </source>
</evidence>
<evidence type="ECO:0007744" key="20">
    <source>
        <dbReference type="PDB" id="2OFW"/>
    </source>
</evidence>
<evidence type="ECO:0007744" key="21">
    <source>
        <dbReference type="PDB" id="2OFX"/>
    </source>
</evidence>
<evidence type="ECO:0007744" key="22">
    <source>
        <dbReference type="PDB" id="2PEY"/>
    </source>
</evidence>
<evidence type="ECO:0007744" key="23">
    <source>
        <dbReference type="PDB" id="2PEZ"/>
    </source>
</evidence>
<evidence type="ECO:0007744" key="24">
    <source>
        <dbReference type="PDB" id="2QJF"/>
    </source>
</evidence>
<evidence type="ECO:0007744" key="25">
    <source>
    </source>
</evidence>
<evidence type="ECO:0007829" key="26">
    <source>
        <dbReference type="PDB" id="1X6V"/>
    </source>
</evidence>
<evidence type="ECO:0007829" key="27">
    <source>
        <dbReference type="PDB" id="2OFX"/>
    </source>
</evidence>
<evidence type="ECO:0007829" key="28">
    <source>
        <dbReference type="PDB" id="2PEZ"/>
    </source>
</evidence>
<evidence type="ECO:0007829" key="29">
    <source>
        <dbReference type="PDB" id="8I1M"/>
    </source>
</evidence>
<organism>
    <name type="scientific">Homo sapiens</name>
    <name type="common">Human</name>
    <dbReference type="NCBI Taxonomy" id="9606"/>
    <lineage>
        <taxon>Eukaryota</taxon>
        <taxon>Metazoa</taxon>
        <taxon>Chordata</taxon>
        <taxon>Craniata</taxon>
        <taxon>Vertebrata</taxon>
        <taxon>Euteleostomi</taxon>
        <taxon>Mammalia</taxon>
        <taxon>Eutheria</taxon>
        <taxon>Euarchontoglires</taxon>
        <taxon>Primates</taxon>
        <taxon>Haplorrhini</taxon>
        <taxon>Catarrhini</taxon>
        <taxon>Hominidae</taxon>
        <taxon>Homo</taxon>
    </lineage>
</organism>
<reference key="1">
    <citation type="journal article" date="1998" name="FASEB J.">
        <title>Sulfation in high endothelial venules: cloning and expression of the human PAPS synthetase.</title>
        <authorList>
            <person name="Girard J.-P."/>
            <person name="Baekkevold E.S."/>
            <person name="Amalric F."/>
        </authorList>
    </citation>
    <scope>NUCLEOTIDE SEQUENCE [MRNA]</scope>
    <scope>FUNCTION</scope>
    <scope>CATALYTIC ACTIVITY</scope>
    <scope>PATHWAY</scope>
    <scope>ACTIVITY REGULATION</scope>
    <scope>TISSUE SPECIFICITY</scope>
    <source>
        <tissue>Tonsil</tissue>
    </source>
</reference>
<reference key="2">
    <citation type="journal article" date="1998" name="J. Biol. Chem.">
        <title>Molecular cloning, expression, and characterization of human bifunctional 3'-phosphoadenosine 5'-phosphosulfate synthase and its functional domains.</title>
        <authorList>
            <person name="Venkatachalam K.V."/>
            <person name="Akita H."/>
            <person name="Strott C.A."/>
        </authorList>
    </citation>
    <scope>NUCLEOTIDE SEQUENCE [GENOMIC DNA]</scope>
    <scope>FUNCTION</scope>
    <scope>CATALYTIC ACTIVITY</scope>
    <scope>PATHWAY</scope>
    <scope>VARIANTS PHE-270 AND LEU-587</scope>
    <source>
        <tissue>Fetal brain</tissue>
    </source>
</reference>
<reference key="3">
    <citation type="journal article" date="1998" name="Biosci. Biotechnol. Biochem.">
        <title>cDNA cloning, expression, and characterization of the human bifunctional ATP sulfurylase/adenosine 5'-phosphosulfate kinase enzyme.</title>
        <authorList>
            <person name="Yanagisawa K."/>
            <person name="Sakakibara Y."/>
            <person name="Suiko M."/>
            <person name="Takami Y."/>
            <person name="Nakayama T."/>
            <person name="Nakajima H."/>
            <person name="Takayanagi K."/>
            <person name="Natori Y."/>
            <person name="Liu M.-C."/>
        </authorList>
    </citation>
    <scope>NUCLEOTIDE SEQUENCE [MRNA]</scope>
    <scope>FUNCTION</scope>
    <scope>CATALYTIC ACTIVITY</scope>
    <scope>PATHWAY</scope>
    <source>
        <tissue>Brain</tissue>
    </source>
</reference>
<reference key="4">
    <citation type="submission" date="1997-07" db="EMBL/GenBank/DDBJ databases">
        <title>Human ATP sulfurylase/APS kinase.</title>
        <authorList>
            <person name="Deyrup A.T."/>
        </authorList>
    </citation>
    <scope>NUCLEOTIDE SEQUENCE [MRNA]</scope>
    <scope>VARIANT LEU-587</scope>
</reference>
<reference key="5">
    <citation type="journal article" date="2000" name="Biochem. Biophys. Res. Commun.">
        <title>Human 3'-phosphoadenosine 5'-phosphosulfate synthetase 1 (PAPSS1) and PAPSS2: gene cloning, characterization and chromosomal localization.</title>
        <authorList>
            <person name="Xu Z.-H."/>
            <person name="Otterness D.M."/>
            <person name="Freimuth R.R."/>
            <person name="Carlini E.J."/>
            <person name="Wood T.C."/>
            <person name="Mitchell S."/>
            <person name="Moon E."/>
            <person name="Kim U.-J."/>
            <person name="Xu J.-P."/>
            <person name="Siciliano M.J."/>
            <person name="Weinshilboum R.M."/>
        </authorList>
    </citation>
    <scope>NUCLEOTIDE SEQUENCE [GENOMIC DNA / MRNA]</scope>
    <scope>VARIANT LEU-587</scope>
    <source>
        <tissue>Brain</tissue>
    </source>
</reference>
<reference key="6">
    <citation type="journal article" date="2004" name="Nat. Genet.">
        <title>Complete sequencing and characterization of 21,243 full-length human cDNAs.</title>
        <authorList>
            <person name="Ota T."/>
            <person name="Suzuki Y."/>
            <person name="Nishikawa T."/>
            <person name="Otsuki T."/>
            <person name="Sugiyama T."/>
            <person name="Irie R."/>
            <person name="Wakamatsu A."/>
            <person name="Hayashi K."/>
            <person name="Sato H."/>
            <person name="Nagai K."/>
            <person name="Kimura K."/>
            <person name="Makita H."/>
            <person name="Sekine M."/>
            <person name="Obayashi M."/>
            <person name="Nishi T."/>
            <person name="Shibahara T."/>
            <person name="Tanaka T."/>
            <person name="Ishii S."/>
            <person name="Yamamoto J."/>
            <person name="Saito K."/>
            <person name="Kawai Y."/>
            <person name="Isono Y."/>
            <person name="Nakamura Y."/>
            <person name="Nagahari K."/>
            <person name="Murakami K."/>
            <person name="Yasuda T."/>
            <person name="Iwayanagi T."/>
            <person name="Wagatsuma M."/>
            <person name="Shiratori A."/>
            <person name="Sudo H."/>
            <person name="Hosoiri T."/>
            <person name="Kaku Y."/>
            <person name="Kodaira H."/>
            <person name="Kondo H."/>
            <person name="Sugawara M."/>
            <person name="Takahashi M."/>
            <person name="Kanda K."/>
            <person name="Yokoi T."/>
            <person name="Furuya T."/>
            <person name="Kikkawa E."/>
            <person name="Omura Y."/>
            <person name="Abe K."/>
            <person name="Kamihara K."/>
            <person name="Katsuta N."/>
            <person name="Sato K."/>
            <person name="Tanikawa M."/>
            <person name="Yamazaki M."/>
            <person name="Ninomiya K."/>
            <person name="Ishibashi T."/>
            <person name="Yamashita H."/>
            <person name="Murakawa K."/>
            <person name="Fujimori K."/>
            <person name="Tanai H."/>
            <person name="Kimata M."/>
            <person name="Watanabe M."/>
            <person name="Hiraoka S."/>
            <person name="Chiba Y."/>
            <person name="Ishida S."/>
            <person name="Ono Y."/>
            <person name="Takiguchi S."/>
            <person name="Watanabe S."/>
            <person name="Yosida M."/>
            <person name="Hotuta T."/>
            <person name="Kusano J."/>
            <person name="Kanehori K."/>
            <person name="Takahashi-Fujii A."/>
            <person name="Hara H."/>
            <person name="Tanase T.-O."/>
            <person name="Nomura Y."/>
            <person name="Togiya S."/>
            <person name="Komai F."/>
            <person name="Hara R."/>
            <person name="Takeuchi K."/>
            <person name="Arita M."/>
            <person name="Imose N."/>
            <person name="Musashino K."/>
            <person name="Yuuki H."/>
            <person name="Oshima A."/>
            <person name="Sasaki N."/>
            <person name="Aotsuka S."/>
            <person name="Yoshikawa Y."/>
            <person name="Matsunawa H."/>
            <person name="Ichihara T."/>
            <person name="Shiohata N."/>
            <person name="Sano S."/>
            <person name="Moriya S."/>
            <person name="Momiyama H."/>
            <person name="Satoh N."/>
            <person name="Takami S."/>
            <person name="Terashima Y."/>
            <person name="Suzuki O."/>
            <person name="Nakagawa S."/>
            <person name="Senoh A."/>
            <person name="Mizoguchi H."/>
            <person name="Goto Y."/>
            <person name="Shimizu F."/>
            <person name="Wakebe H."/>
            <person name="Hishigaki H."/>
            <person name="Watanabe T."/>
            <person name="Sugiyama A."/>
            <person name="Takemoto M."/>
            <person name="Kawakami B."/>
            <person name="Yamazaki M."/>
            <person name="Watanabe K."/>
            <person name="Kumagai A."/>
            <person name="Itakura S."/>
            <person name="Fukuzumi Y."/>
            <person name="Fujimori Y."/>
            <person name="Komiyama M."/>
            <person name="Tashiro H."/>
            <person name="Tanigami A."/>
            <person name="Fujiwara T."/>
            <person name="Ono T."/>
            <person name="Yamada K."/>
            <person name="Fujii Y."/>
            <person name="Ozaki K."/>
            <person name="Hirao M."/>
            <person name="Ohmori Y."/>
            <person name="Kawabata A."/>
            <person name="Hikiji T."/>
            <person name="Kobatake N."/>
            <person name="Inagaki H."/>
            <person name="Ikema Y."/>
            <person name="Okamoto S."/>
            <person name="Okitani R."/>
            <person name="Kawakami T."/>
            <person name="Noguchi S."/>
            <person name="Itoh T."/>
            <person name="Shigeta K."/>
            <person name="Senba T."/>
            <person name="Matsumura K."/>
            <person name="Nakajima Y."/>
            <person name="Mizuno T."/>
            <person name="Morinaga M."/>
            <person name="Sasaki M."/>
            <person name="Togashi T."/>
            <person name="Oyama M."/>
            <person name="Hata H."/>
            <person name="Watanabe M."/>
            <person name="Komatsu T."/>
            <person name="Mizushima-Sugano J."/>
            <person name="Satoh T."/>
            <person name="Shirai Y."/>
            <person name="Takahashi Y."/>
            <person name="Nakagawa K."/>
            <person name="Okumura K."/>
            <person name="Nagase T."/>
            <person name="Nomura N."/>
            <person name="Kikuchi H."/>
            <person name="Masuho Y."/>
            <person name="Yamashita R."/>
            <person name="Nakai K."/>
            <person name="Yada T."/>
            <person name="Nakamura Y."/>
            <person name="Ohara O."/>
            <person name="Isogai T."/>
            <person name="Sugano S."/>
        </authorList>
    </citation>
    <scope>NUCLEOTIDE SEQUENCE [LARGE SCALE MRNA]</scope>
    <source>
        <tissue evidence="16">Trachea</tissue>
    </source>
</reference>
<reference key="7">
    <citation type="submission" date="2004-06" db="EMBL/GenBank/DDBJ databases">
        <title>Cloning of human full open reading frames in Gateway(TM) system entry vector (pDONR201).</title>
        <authorList>
            <person name="Ebert L."/>
            <person name="Schick M."/>
            <person name="Neubert P."/>
            <person name="Schatten R."/>
            <person name="Henze S."/>
            <person name="Korn B."/>
        </authorList>
    </citation>
    <scope>NUCLEOTIDE SEQUENCE [LARGE SCALE MRNA]</scope>
</reference>
<reference key="8">
    <citation type="submission" date="2005-07" db="EMBL/GenBank/DDBJ databases">
        <authorList>
            <person name="Mural R.J."/>
            <person name="Istrail S."/>
            <person name="Sutton G.G."/>
            <person name="Florea L."/>
            <person name="Halpern A.L."/>
            <person name="Mobarry C.M."/>
            <person name="Lippert R."/>
            <person name="Walenz B."/>
            <person name="Shatkay H."/>
            <person name="Dew I."/>
            <person name="Miller J.R."/>
            <person name="Flanigan M.J."/>
            <person name="Edwards N.J."/>
            <person name="Bolanos R."/>
            <person name="Fasulo D."/>
            <person name="Halldorsson B.V."/>
            <person name="Hannenhalli S."/>
            <person name="Turner R."/>
            <person name="Yooseph S."/>
            <person name="Lu F."/>
            <person name="Nusskern D.R."/>
            <person name="Shue B.C."/>
            <person name="Zheng X.H."/>
            <person name="Zhong F."/>
            <person name="Delcher A.L."/>
            <person name="Huson D.H."/>
            <person name="Kravitz S.A."/>
            <person name="Mouchard L."/>
            <person name="Reinert K."/>
            <person name="Remington K.A."/>
            <person name="Clark A.G."/>
            <person name="Waterman M.S."/>
            <person name="Eichler E.E."/>
            <person name="Adams M.D."/>
            <person name="Hunkapiller M.W."/>
            <person name="Myers E.W."/>
            <person name="Venter J.C."/>
        </authorList>
    </citation>
    <scope>NUCLEOTIDE SEQUENCE [LARGE SCALE GENOMIC DNA]</scope>
</reference>
<reference key="9">
    <citation type="journal article" date="2004" name="Genome Res.">
        <title>The status, quality, and expansion of the NIH full-length cDNA project: the Mammalian Gene Collection (MGC).</title>
        <authorList>
            <consortium name="The MGC Project Team"/>
        </authorList>
    </citation>
    <scope>NUCLEOTIDE SEQUENCE [LARGE SCALE MRNA]</scope>
    <source>
        <tissue>Eye</tissue>
        <tissue>Uterus</tissue>
    </source>
</reference>
<reference key="10">
    <citation type="journal article" date="1999" name="J. Biol. Chem.">
        <title>Site-selected mutagenesis of a conserved nucleotide binding HXGH motif located in the ATP sulfurylase domain of human bifunctional 3'-phosphoadenosine 5'-phosphosulfate synthase.</title>
        <authorList>
            <person name="Venkatachalam K.V."/>
            <person name="Fuda H."/>
            <person name="Koonin E.V."/>
            <person name="Strott C.A."/>
        </authorList>
    </citation>
    <scope>MUTAGENESIS OF HIS-425; ASN-426; GLY-427 AND HIS-428</scope>
</reference>
<reference key="11">
    <citation type="journal article" date="2004" name="Acta Crystallogr. D">
        <title>Expression, purification and crystallization of human 3'-phosphoadenosine-5'-phosphosulfate synthetase 1.</title>
        <authorList>
            <person name="Harjes S."/>
            <person name="Scheidig A."/>
            <person name="Bayer P."/>
        </authorList>
    </citation>
    <scope>CRYSTALLIZATION</scope>
    <scope>FUNCTION</scope>
    <scope>CATALYTIC ACTIVITY</scope>
    <scope>SUBUNIT</scope>
    <scope>PATHWAY</scope>
</reference>
<reference key="12">
    <citation type="journal article" date="2011" name="BMC Syst. Biol.">
        <title>Initial characterization of the human central proteome.</title>
        <authorList>
            <person name="Burkard T.R."/>
            <person name="Planyavsky M."/>
            <person name="Kaupe I."/>
            <person name="Breitwieser F.P."/>
            <person name="Buerckstuemmer T."/>
            <person name="Bennett K.L."/>
            <person name="Superti-Furga G."/>
            <person name="Colinge J."/>
        </authorList>
    </citation>
    <scope>IDENTIFICATION BY MASS SPECTROMETRY [LARGE SCALE ANALYSIS]</scope>
</reference>
<reference key="13">
    <citation type="journal article" date="2012" name="Mol. Cell. Proteomics">
        <title>Comparative large-scale characterisation of plant vs. mammal proteins reveals similar and idiosyncratic N-alpha acetylation features.</title>
        <authorList>
            <person name="Bienvenut W.V."/>
            <person name="Sumpton D."/>
            <person name="Martinez A."/>
            <person name="Lilla S."/>
            <person name="Espagne C."/>
            <person name="Meinnel T."/>
            <person name="Giglione C."/>
        </authorList>
    </citation>
    <scope>ACETYLATION [LARGE SCALE ANALYSIS] AT MET-1</scope>
    <scope>IDENTIFICATION BY MASS SPECTROMETRY [LARGE SCALE ANALYSIS]</scope>
</reference>
<reference key="14">
    <citation type="journal article" date="2005" name="J. Mol. Biol.">
        <title>The crystal structure of human PAPS synthetase 1 reveals asymmetry in substrate binding.</title>
        <authorList>
            <person name="Harjes S."/>
            <person name="Bayer P."/>
            <person name="Scheidig A.J."/>
        </authorList>
    </citation>
    <scope>X-RAY CRYSTALLOGRAPHY (1.75 ANGSTROMS) IN COMPLEXES WITH ATP ANALOGS</scope>
    <scope>SUBUNIT</scope>
    <scope>DOMAIN</scope>
</reference>
<reference key="15">
    <citation type="journal article" date="2007" name="J. Biol. Chem.">
        <title>Structural mechanism for substrate inhibition of the adenosine 5'-phosphosulfate kinase domain of human 3'-phosphoadenosine 5'-phosphosulfate synthetase 1 and its ramifications for enzyme regulation.</title>
        <authorList>
            <person name="Sekulic N."/>
            <person name="Konrad M."/>
            <person name="Lavie A."/>
        </authorList>
    </citation>
    <scope>X-RAY CRYSTALLOGRAPHY (1.40 ANGSTROMS) OF 51-226 IN COMPLEXES WITH ATP AND 3'-PHOSPHO-5'-ADENYLYL SULFATE ANALOGS</scope>
    <scope>CATALYTIC ACTIVITY</scope>
    <scope>SUBUNIT</scope>
    <scope>MUTAGENESIS OF ARG-37 AND ARG-40</scope>
    <scope>DOMAIN</scope>
    <scope>ACTIVITY REGULATION</scope>
</reference>
<reference key="16">
    <citation type="journal article" date="2007" name="J. Mol. Biol.">
        <title>Elucidation of the active conformation of the APS-kinase domain of human PAPS synthetase 1.</title>
        <authorList>
            <person name="Sekulic N."/>
            <person name="Dietrich K."/>
            <person name="Paarmann I."/>
            <person name="Ort S."/>
            <person name="Konrad M."/>
            <person name="Lavie A."/>
        </authorList>
    </citation>
    <scope>X-RAY CRYSTALLOGRAPHY (1.90 ANGSTROMS) OF 25-227 IN COMPLEXES WITH 3'-PHOSPHO-5'-ADENYLYL SULFATE AND ADENOSINE-5'-PHOSPHOSULFATE</scope>
    <scope>CATALYTIC ACTIVITY</scope>
    <scope>DOMAIN</scope>
</reference>
<accession>O43252</accession>
<accession>O43841</accession>
<accession>O75332</accession>
<accession>Q6IAX6</accession>
<accession>Q96FB1</accession>
<accession>Q96TF4</accession>
<accession>Q9P1P9</accession>
<accession>Q9UE98</accession>
<gene>
    <name type="primary">PAPSS1</name>
    <name type="synonym">ATPSK1</name>
    <name type="synonym">PAPSS</name>
</gene>
<name>PAPS1_HUMAN</name>
<feature type="chain" id="PRO_0000105959" description="Bifunctional 3'-phosphoadenosine 5'-phosphosulfate synthase 1">
    <location>
        <begin position="1"/>
        <end position="624"/>
    </location>
</feature>
<feature type="region of interest" description="Adenylyl-sulfate kinase" evidence="13 14 15">
    <location>
        <begin position="1"/>
        <end position="225"/>
    </location>
</feature>
<feature type="region of interest" description="Sulfate adenylyltransferase" evidence="13">
    <location>
        <begin position="234"/>
        <end position="624"/>
    </location>
</feature>
<feature type="binding site" evidence="4 5 6 17 18 19 21 22 23">
    <location>
        <begin position="62"/>
        <end position="67"/>
    </location>
    <ligand>
        <name>ATP</name>
        <dbReference type="ChEBI" id="CHEBI:30616"/>
        <label>1</label>
    </ligand>
</feature>
<feature type="binding site" evidence="14 21">
    <location>
        <begin position="89"/>
        <end position="92"/>
    </location>
    <ligand>
        <name>adenosine 5'-phosphosulfate</name>
        <dbReference type="ChEBI" id="CHEBI:58243"/>
    </ligand>
</feature>
<feature type="binding site" evidence="14 21">
    <location>
        <position position="101"/>
    </location>
    <ligand>
        <name>adenosine 5'-phosphosulfate</name>
        <dbReference type="ChEBI" id="CHEBI:58243"/>
    </ligand>
</feature>
<feature type="binding site" evidence="14 15 21 23">
    <location>
        <begin position="106"/>
        <end position="109"/>
    </location>
    <ligand>
        <name>adenosine 5'-phosphosulfate</name>
        <dbReference type="ChEBI" id="CHEBI:58243"/>
    </ligand>
</feature>
<feature type="binding site" evidence="14 15 21 23">
    <location>
        <begin position="132"/>
        <end position="133"/>
    </location>
    <ligand>
        <name>adenosine 5'-phosphosulfate</name>
        <dbReference type="ChEBI" id="CHEBI:58243"/>
    </ligand>
</feature>
<feature type="binding site" evidence="14 21">
    <location>
        <position position="171"/>
    </location>
    <ligand>
        <name>adenosine 5'-phosphosulfate</name>
        <dbReference type="ChEBI" id="CHEBI:58243"/>
    </ligand>
</feature>
<feature type="binding site" evidence="14 15 21 23">
    <location>
        <begin position="184"/>
        <end position="185"/>
    </location>
    <ligand>
        <name>adenosine 5'-phosphosulfate</name>
        <dbReference type="ChEBI" id="CHEBI:58243"/>
    </ligand>
</feature>
<feature type="binding site" evidence="4 5 6 17 18 19 20 21 22 23">
    <location>
        <position position="207"/>
    </location>
    <ligand>
        <name>ATP</name>
        <dbReference type="ChEBI" id="CHEBI:30616"/>
        <label>1</label>
    </ligand>
</feature>
<feature type="binding site" evidence="5 21">
    <location>
        <position position="212"/>
    </location>
    <ligand>
        <name>ATP</name>
        <dbReference type="ChEBI" id="CHEBI:30616"/>
        <label>1</label>
    </ligand>
</feature>
<feature type="binding site" evidence="4 18 19 24">
    <location>
        <begin position="419"/>
        <end position="422"/>
    </location>
    <ligand>
        <name>ATP</name>
        <dbReference type="ChEBI" id="CHEBI:30616"/>
        <label>2</label>
    </ligand>
</feature>
<feature type="binding site" evidence="4 18 19 24">
    <location>
        <begin position="521"/>
        <end position="525"/>
    </location>
    <ligand>
        <name>ATP</name>
        <dbReference type="ChEBI" id="CHEBI:30616"/>
        <label>2</label>
    </ligand>
</feature>
<feature type="binding site" evidence="4 18 19 24">
    <location>
        <position position="563"/>
    </location>
    <ligand>
        <name>ATP</name>
        <dbReference type="ChEBI" id="CHEBI:30616"/>
        <label>2</label>
    </ligand>
</feature>
<feature type="modified residue" description="N-acetylmethionine" evidence="25">
    <location>
        <position position="1"/>
    </location>
</feature>
<feature type="modified residue" description="N6-acetyllysine" evidence="1">
    <location>
        <position position="12"/>
    </location>
</feature>
<feature type="sequence variant" id="VAR_014065" description="In dbSNP:rs1127008." evidence="9">
    <original>L</original>
    <variation>F</variation>
    <location>
        <position position="270"/>
    </location>
</feature>
<feature type="sequence variant" id="VAR_014064" description="In dbSNP:rs1127014." evidence="2 9 11">
    <original>S</original>
    <variation>L</variation>
    <location>
        <position position="587"/>
    </location>
</feature>
<feature type="mutagenesis site" description="Abolishes inhibition by the substrate adenylyl sulfate." evidence="6">
    <original>R</original>
    <variation>A</variation>
    <location>
        <position position="37"/>
    </location>
</feature>
<feature type="mutagenesis site" description="Abolishes inhibition by the substrate adenylyl sulfate." evidence="6">
    <original>R</original>
    <variation>A</variation>
    <location>
        <position position="40"/>
    </location>
</feature>
<feature type="mutagenesis site" description="Loss of activity." evidence="10">
    <original>H</original>
    <variation>A</variation>
    <location>
        <position position="425"/>
    </location>
</feature>
<feature type="mutagenesis site" description="Increased activity." evidence="10">
    <original>N</original>
    <variation>K</variation>
    <location>
        <position position="426"/>
    </location>
</feature>
<feature type="mutagenesis site" description="Loss of activity.">
    <original>GH</original>
    <variation>AA</variation>
    <location>
        <begin position="427"/>
        <end position="428"/>
    </location>
</feature>
<feature type="mutagenesis site" description="30% decrease in activity." evidence="10">
    <original>G</original>
    <variation>A</variation>
    <location>
        <position position="427"/>
    </location>
</feature>
<feature type="mutagenesis site" description="Loss of activity." evidence="10">
    <original>H</original>
    <variation>A</variation>
    <location>
        <position position="428"/>
    </location>
</feature>
<feature type="sequence conflict" description="In Ref. 1; CAA71413." evidence="12" ref="1">
    <original>G</original>
    <variation>A</variation>
    <location>
        <position position="456"/>
    </location>
</feature>
<feature type="sequence conflict" description="In Ref. 2; AAC39894." evidence="12" ref="2">
    <location>
        <position position="456"/>
    </location>
</feature>
<feature type="sequence conflict" description="In Ref. 4; AAD09325." evidence="12" ref="4">
    <original>IV</original>
    <variation>MC</variation>
    <location>
        <begin position="519"/>
        <end position="520"/>
    </location>
</feature>
<feature type="helix" evidence="29">
    <location>
        <begin position="37"/>
        <end position="43"/>
    </location>
</feature>
<feature type="strand" evidence="29">
    <location>
        <begin position="44"/>
        <end position="47"/>
    </location>
</feature>
<feature type="strand" evidence="28">
    <location>
        <begin position="53"/>
        <end position="58"/>
    </location>
</feature>
<feature type="helix" evidence="28">
    <location>
        <begin position="65"/>
        <end position="78"/>
    </location>
</feature>
<feature type="strand" evidence="28">
    <location>
        <begin position="83"/>
        <end position="87"/>
    </location>
</feature>
<feature type="helix" evidence="28">
    <location>
        <begin position="88"/>
        <end position="91"/>
    </location>
</feature>
<feature type="turn" evidence="28">
    <location>
        <begin position="92"/>
        <end position="98"/>
    </location>
</feature>
<feature type="helix" evidence="28">
    <location>
        <begin position="103"/>
        <end position="122"/>
    </location>
</feature>
<feature type="strand" evidence="28">
    <location>
        <begin position="126"/>
        <end position="130"/>
    </location>
</feature>
<feature type="helix" evidence="28">
    <location>
        <begin position="136"/>
        <end position="148"/>
    </location>
</feature>
<feature type="strand" evidence="28">
    <location>
        <begin position="153"/>
        <end position="159"/>
    </location>
</feature>
<feature type="helix" evidence="28">
    <location>
        <begin position="162"/>
        <end position="168"/>
    </location>
</feature>
<feature type="helix" evidence="28">
    <location>
        <begin position="173"/>
        <end position="178"/>
    </location>
</feature>
<feature type="strand" evidence="27">
    <location>
        <begin position="181"/>
        <end position="184"/>
    </location>
</feature>
<feature type="turn" evidence="28">
    <location>
        <begin position="186"/>
        <end position="188"/>
    </location>
</feature>
<feature type="strand" evidence="28">
    <location>
        <begin position="199"/>
        <end position="203"/>
    </location>
</feature>
<feature type="turn" evidence="28">
    <location>
        <begin position="204"/>
        <end position="206"/>
    </location>
</feature>
<feature type="helix" evidence="28">
    <location>
        <begin position="209"/>
        <end position="222"/>
    </location>
</feature>
<feature type="helix" evidence="26">
    <location>
        <begin position="241"/>
        <end position="243"/>
    </location>
</feature>
<feature type="helix" evidence="26">
    <location>
        <begin position="244"/>
        <end position="252"/>
    </location>
</feature>
<feature type="strand" evidence="26">
    <location>
        <begin position="256"/>
        <end position="258"/>
    </location>
</feature>
<feature type="helix" evidence="26">
    <location>
        <begin position="261"/>
        <end position="271"/>
    </location>
</feature>
<feature type="turn" evidence="26">
    <location>
        <begin position="272"/>
        <end position="277"/>
    </location>
</feature>
<feature type="helix" evidence="26">
    <location>
        <begin position="284"/>
        <end position="293"/>
    </location>
</feature>
<feature type="strand" evidence="26">
    <location>
        <begin position="294"/>
        <end position="296"/>
    </location>
</feature>
<feature type="strand" evidence="26">
    <location>
        <begin position="310"/>
        <end position="312"/>
    </location>
</feature>
<feature type="helix" evidence="26">
    <location>
        <begin position="314"/>
        <end position="320"/>
    </location>
</feature>
<feature type="strand" evidence="26">
    <location>
        <begin position="324"/>
        <end position="330"/>
    </location>
</feature>
<feature type="strand" evidence="26">
    <location>
        <begin position="333"/>
        <end position="345"/>
    </location>
</feature>
<feature type="helix" evidence="26">
    <location>
        <begin position="348"/>
        <end position="356"/>
    </location>
</feature>
<feature type="helix" evidence="26">
    <location>
        <begin position="364"/>
        <end position="371"/>
    </location>
</feature>
<feature type="strand" evidence="26">
    <location>
        <begin position="374"/>
        <end position="383"/>
    </location>
</feature>
<feature type="helix" evidence="26">
    <location>
        <begin position="394"/>
        <end position="396"/>
    </location>
</feature>
<feature type="helix" evidence="26">
    <location>
        <begin position="400"/>
        <end position="409"/>
    </location>
</feature>
<feature type="strand" evidence="26">
    <location>
        <begin position="413"/>
        <end position="422"/>
    </location>
</feature>
<feature type="helix" evidence="26">
    <location>
        <begin position="426"/>
        <end position="442"/>
    </location>
</feature>
<feature type="strand" evidence="26">
    <location>
        <begin position="445"/>
        <end position="454"/>
    </location>
</feature>
<feature type="helix" evidence="26">
    <location>
        <begin position="465"/>
        <end position="477"/>
    </location>
</feature>
<feature type="helix" evidence="26">
    <location>
        <begin position="483"/>
        <end position="485"/>
    </location>
</feature>
<feature type="strand" evidence="26">
    <location>
        <begin position="486"/>
        <end position="488"/>
    </location>
</feature>
<feature type="helix" evidence="26">
    <location>
        <begin position="499"/>
        <end position="512"/>
    </location>
</feature>
<feature type="strand" evidence="26">
    <location>
        <begin position="516"/>
        <end position="520"/>
    </location>
</feature>
<feature type="turn" evidence="26">
    <location>
        <begin position="530"/>
        <end position="532"/>
    </location>
</feature>
<feature type="strand" evidence="26">
    <location>
        <begin position="534"/>
        <end position="537"/>
    </location>
</feature>
<feature type="helix" evidence="26">
    <location>
        <begin position="541"/>
        <end position="548"/>
    </location>
</feature>
<feature type="strand" evidence="26">
    <location>
        <begin position="556"/>
        <end position="559"/>
    </location>
</feature>
<feature type="strand" evidence="26">
    <location>
        <begin position="563"/>
        <end position="566"/>
    </location>
</feature>
<feature type="turn" evidence="26">
    <location>
        <begin position="567"/>
        <end position="570"/>
    </location>
</feature>
<feature type="strand" evidence="26">
    <location>
        <begin position="571"/>
        <end position="574"/>
    </location>
</feature>
<feature type="helix" evidence="26">
    <location>
        <begin position="580"/>
        <end position="582"/>
    </location>
</feature>
<feature type="helix" evidence="26">
    <location>
        <begin position="588"/>
        <end position="596"/>
    </location>
</feature>
<feature type="helix" evidence="26">
    <location>
        <begin position="608"/>
        <end position="621"/>
    </location>
</feature>
<dbReference type="EC" id="2.7.7.4" evidence="3 7 8 9"/>
<dbReference type="EC" id="2.7.1.25" evidence="3 5 6 7 8 9"/>
<dbReference type="EMBL" id="Y10387">
    <property type="protein sequence ID" value="CAA71413.1"/>
    <property type="molecule type" value="mRNA"/>
</dbReference>
<dbReference type="EMBL" id="U53447">
    <property type="protein sequence ID" value="AAC39894.1"/>
    <property type="molecule type" value="Genomic_DNA"/>
</dbReference>
<dbReference type="EMBL" id="AF033026">
    <property type="protein sequence ID" value="AAC28429.1"/>
    <property type="molecule type" value="mRNA"/>
</dbReference>
<dbReference type="EMBL" id="AF016496">
    <property type="protein sequence ID" value="AAD09325.1"/>
    <property type="molecule type" value="mRNA"/>
</dbReference>
<dbReference type="EMBL" id="AF105227">
    <property type="protein sequence ID" value="AAF40236.1"/>
    <property type="molecule type" value="mRNA"/>
</dbReference>
<dbReference type="EMBL" id="AF097721">
    <property type="protein sequence ID" value="AAF40235.1"/>
    <property type="molecule type" value="Genomic_DNA"/>
</dbReference>
<dbReference type="EMBL" id="AF097710">
    <property type="protein sequence ID" value="AAF40235.1"/>
    <property type="status" value="JOINED"/>
    <property type="molecule type" value="Genomic_DNA"/>
</dbReference>
<dbReference type="EMBL" id="AF097711">
    <property type="protein sequence ID" value="AAF40235.1"/>
    <property type="status" value="JOINED"/>
    <property type="molecule type" value="Genomic_DNA"/>
</dbReference>
<dbReference type="EMBL" id="AF097712">
    <property type="protein sequence ID" value="AAF40235.1"/>
    <property type="status" value="JOINED"/>
    <property type="molecule type" value="Genomic_DNA"/>
</dbReference>
<dbReference type="EMBL" id="AF097713">
    <property type="protein sequence ID" value="AAF40235.1"/>
    <property type="status" value="JOINED"/>
    <property type="molecule type" value="Genomic_DNA"/>
</dbReference>
<dbReference type="EMBL" id="AF097714">
    <property type="protein sequence ID" value="AAF40235.1"/>
    <property type="status" value="JOINED"/>
    <property type="molecule type" value="Genomic_DNA"/>
</dbReference>
<dbReference type="EMBL" id="AF097715">
    <property type="protein sequence ID" value="AAF40235.1"/>
    <property type="status" value="JOINED"/>
    <property type="molecule type" value="Genomic_DNA"/>
</dbReference>
<dbReference type="EMBL" id="AF097716">
    <property type="protein sequence ID" value="AAF40235.1"/>
    <property type="status" value="JOINED"/>
    <property type="molecule type" value="Genomic_DNA"/>
</dbReference>
<dbReference type="EMBL" id="AF097717">
    <property type="protein sequence ID" value="AAF40235.1"/>
    <property type="status" value="JOINED"/>
    <property type="molecule type" value="Genomic_DNA"/>
</dbReference>
<dbReference type="EMBL" id="AF097718">
    <property type="protein sequence ID" value="AAF40235.1"/>
    <property type="status" value="JOINED"/>
    <property type="molecule type" value="Genomic_DNA"/>
</dbReference>
<dbReference type="EMBL" id="AF097719">
    <property type="protein sequence ID" value="AAF40235.1"/>
    <property type="status" value="JOINED"/>
    <property type="molecule type" value="Genomic_DNA"/>
</dbReference>
<dbReference type="EMBL" id="AF097720">
    <property type="protein sequence ID" value="AAF40235.1"/>
    <property type="status" value="JOINED"/>
    <property type="molecule type" value="Genomic_DNA"/>
</dbReference>
<dbReference type="EMBL" id="AK292774">
    <property type="protein sequence ID" value="BAF85463.1"/>
    <property type="molecule type" value="mRNA"/>
</dbReference>
<dbReference type="EMBL" id="CR457028">
    <property type="protein sequence ID" value="CAG33309.1"/>
    <property type="molecule type" value="mRNA"/>
</dbReference>
<dbReference type="EMBL" id="CH471057">
    <property type="protein sequence ID" value="EAX06210.1"/>
    <property type="molecule type" value="Genomic_DNA"/>
</dbReference>
<dbReference type="EMBL" id="BC011392">
    <property type="protein sequence ID" value="AAH11392.1"/>
    <property type="molecule type" value="mRNA"/>
</dbReference>
<dbReference type="EMBL" id="BC050627">
    <property type="protein sequence ID" value="AAH50627.1"/>
    <property type="molecule type" value="mRNA"/>
</dbReference>
<dbReference type="CCDS" id="CCDS3676.1"/>
<dbReference type="PIR" id="JW0087">
    <property type="entry name" value="JW0087"/>
</dbReference>
<dbReference type="RefSeq" id="NP_005434.4">
    <property type="nucleotide sequence ID" value="NM_005443.4"/>
</dbReference>
<dbReference type="RefSeq" id="XP_011530702.1">
    <property type="nucleotide sequence ID" value="XM_011532400.1"/>
</dbReference>
<dbReference type="RefSeq" id="XP_011530703.1">
    <property type="nucleotide sequence ID" value="XM_011532401.1"/>
</dbReference>
<dbReference type="PDB" id="1X6V">
    <property type="method" value="X-ray"/>
    <property type="resolution" value="1.75 A"/>
    <property type="chains" value="A/B=1-624"/>
</dbReference>
<dbReference type="PDB" id="1XJQ">
    <property type="method" value="X-ray"/>
    <property type="resolution" value="2.06 A"/>
    <property type="chains" value="A/B=1-624"/>
</dbReference>
<dbReference type="PDB" id="1XNJ">
    <property type="method" value="X-ray"/>
    <property type="resolution" value="1.98 A"/>
    <property type="chains" value="A/B=1-624"/>
</dbReference>
<dbReference type="PDB" id="2OFW">
    <property type="method" value="X-ray"/>
    <property type="resolution" value="2.05 A"/>
    <property type="chains" value="A/B/C/D/E/F/G/H=24-225"/>
</dbReference>
<dbReference type="PDB" id="2OFX">
    <property type="method" value="X-ray"/>
    <property type="resolution" value="1.90 A"/>
    <property type="chains" value="A/B=25-227"/>
</dbReference>
<dbReference type="PDB" id="2PEY">
    <property type="method" value="X-ray"/>
    <property type="resolution" value="1.88 A"/>
    <property type="chains" value="A/B=51-226"/>
</dbReference>
<dbReference type="PDB" id="2PEZ">
    <property type="method" value="X-ray"/>
    <property type="resolution" value="1.40 A"/>
    <property type="chains" value="A/B=51-226"/>
</dbReference>
<dbReference type="PDB" id="2QJF">
    <property type="method" value="X-ray"/>
    <property type="resolution" value="2.20 A"/>
    <property type="chains" value="A/B=220-624"/>
</dbReference>
<dbReference type="PDB" id="8I1M">
    <property type="method" value="X-ray"/>
    <property type="resolution" value="1.70 A"/>
    <property type="chains" value="A=25-227"/>
</dbReference>
<dbReference type="PDBsum" id="1X6V"/>
<dbReference type="PDBsum" id="1XJQ"/>
<dbReference type="PDBsum" id="1XNJ"/>
<dbReference type="PDBsum" id="2OFW"/>
<dbReference type="PDBsum" id="2OFX"/>
<dbReference type="PDBsum" id="2PEY"/>
<dbReference type="PDBsum" id="2PEZ"/>
<dbReference type="PDBsum" id="2QJF"/>
<dbReference type="PDBsum" id="8I1M"/>
<dbReference type="SMR" id="O43252"/>
<dbReference type="BioGRID" id="114522">
    <property type="interactions" value="86"/>
</dbReference>
<dbReference type="FunCoup" id="O43252">
    <property type="interactions" value="1531"/>
</dbReference>
<dbReference type="IntAct" id="O43252">
    <property type="interactions" value="38"/>
</dbReference>
<dbReference type="STRING" id="9606.ENSP00000265174"/>
<dbReference type="DrugBank" id="DB03708">
    <property type="generic name" value="Adenosine 5'-phosphosulfate"/>
</dbReference>
<dbReference type="DrugBank" id="DB02661">
    <property type="generic name" value="Adenosine-5'-diphosphate-2',3'-vanadate"/>
</dbReference>
<dbReference type="DrugBank" id="DB09462">
    <property type="generic name" value="Glycerin"/>
</dbReference>
<dbReference type="GlyGen" id="O43252">
    <property type="glycosylation" value="1 site, 1 O-linked glycan (1 site)"/>
</dbReference>
<dbReference type="iPTMnet" id="O43252"/>
<dbReference type="MetOSite" id="O43252"/>
<dbReference type="PhosphoSitePlus" id="O43252"/>
<dbReference type="BioMuta" id="PAPSS1"/>
<dbReference type="CPTAC" id="CPTAC-248"/>
<dbReference type="CPTAC" id="CPTAC-249"/>
<dbReference type="jPOST" id="O43252"/>
<dbReference type="MassIVE" id="O43252"/>
<dbReference type="PaxDb" id="9606-ENSP00000265174"/>
<dbReference type="PeptideAtlas" id="O43252"/>
<dbReference type="ProteomicsDB" id="48837"/>
<dbReference type="Pumba" id="O43252"/>
<dbReference type="Antibodypedia" id="26233">
    <property type="antibodies" value="167 antibodies from 28 providers"/>
</dbReference>
<dbReference type="DNASU" id="9061"/>
<dbReference type="Ensembl" id="ENST00000265174.5">
    <property type="protein sequence ID" value="ENSP00000265174.4"/>
    <property type="gene ID" value="ENSG00000138801.9"/>
</dbReference>
<dbReference type="GeneID" id="9061"/>
<dbReference type="KEGG" id="hsa:9061"/>
<dbReference type="MANE-Select" id="ENST00000265174.5">
    <property type="protein sequence ID" value="ENSP00000265174.4"/>
    <property type="RefSeq nucleotide sequence ID" value="NM_005443.5"/>
    <property type="RefSeq protein sequence ID" value="NP_005434.4"/>
</dbReference>
<dbReference type="UCSC" id="uc003hyk.4">
    <property type="organism name" value="human"/>
</dbReference>
<dbReference type="AGR" id="HGNC:8603"/>
<dbReference type="CTD" id="9061"/>
<dbReference type="DisGeNET" id="9061"/>
<dbReference type="GeneCards" id="PAPSS1"/>
<dbReference type="HGNC" id="HGNC:8603">
    <property type="gene designation" value="PAPSS1"/>
</dbReference>
<dbReference type="HPA" id="ENSG00000138801">
    <property type="expression patterns" value="Low tissue specificity"/>
</dbReference>
<dbReference type="MIM" id="603262">
    <property type="type" value="gene"/>
</dbReference>
<dbReference type="neXtProt" id="NX_O43252"/>
<dbReference type="OpenTargets" id="ENSG00000138801"/>
<dbReference type="PharmGKB" id="PA384"/>
<dbReference type="VEuPathDB" id="HostDB:ENSG00000138801"/>
<dbReference type="eggNOG" id="KOG4238">
    <property type="taxonomic scope" value="Eukaryota"/>
</dbReference>
<dbReference type="GeneTree" id="ENSGT00390000009613"/>
<dbReference type="HOGENOM" id="CLU_009463_3_0_1"/>
<dbReference type="InParanoid" id="O43252"/>
<dbReference type="OMA" id="LPASQCK"/>
<dbReference type="OrthoDB" id="506431at2759"/>
<dbReference type="PAN-GO" id="O43252">
    <property type="GO annotations" value="3 GO annotations based on evolutionary models"/>
</dbReference>
<dbReference type="PhylomeDB" id="O43252"/>
<dbReference type="TreeFam" id="TF313143"/>
<dbReference type="BioCyc" id="MetaCyc:HS06566-MONOMER"/>
<dbReference type="BRENDA" id="2.7.1.25">
    <property type="organism ID" value="2681"/>
</dbReference>
<dbReference type="BRENDA" id="2.7.7.4">
    <property type="organism ID" value="2681"/>
</dbReference>
<dbReference type="PathwayCommons" id="O43252"/>
<dbReference type="Reactome" id="R-HSA-174362">
    <property type="pathway name" value="Transport and synthesis of PAPS"/>
</dbReference>
<dbReference type="Reactome" id="R-HSA-2408550">
    <property type="pathway name" value="Metabolism of ingested H2SeO4 and H2SeO3 into H2Se"/>
</dbReference>
<dbReference type="Reactome" id="R-HSA-6802952">
    <property type="pathway name" value="Signaling by BRAF and RAF1 fusions"/>
</dbReference>
<dbReference type="SABIO-RK" id="O43252"/>
<dbReference type="SignaLink" id="O43252"/>
<dbReference type="UniPathway" id="UPA00097"/>
<dbReference type="BioGRID-ORCS" id="9061">
    <property type="hits" value="21 hits in 1166 CRISPR screens"/>
</dbReference>
<dbReference type="ChiTaRS" id="PAPSS1">
    <property type="organism name" value="human"/>
</dbReference>
<dbReference type="EvolutionaryTrace" id="O43252"/>
<dbReference type="GeneWiki" id="PAPSS1"/>
<dbReference type="GenomeRNAi" id="9061"/>
<dbReference type="Pharos" id="O43252">
    <property type="development level" value="Tbio"/>
</dbReference>
<dbReference type="PRO" id="PR:O43252"/>
<dbReference type="Proteomes" id="UP000005640">
    <property type="component" value="Chromosome 4"/>
</dbReference>
<dbReference type="RNAct" id="O43252">
    <property type="molecule type" value="protein"/>
</dbReference>
<dbReference type="Bgee" id="ENSG00000138801">
    <property type="expression patterns" value="Expressed in inferior vagus X ganglion and 211 other cell types or tissues"/>
</dbReference>
<dbReference type="GO" id="GO:0005829">
    <property type="term" value="C:cytosol"/>
    <property type="evidence" value="ECO:0000314"/>
    <property type="project" value="FlyBase"/>
</dbReference>
<dbReference type="GO" id="GO:0005634">
    <property type="term" value="C:nucleus"/>
    <property type="evidence" value="ECO:0000314"/>
    <property type="project" value="FlyBase"/>
</dbReference>
<dbReference type="GO" id="GO:0004020">
    <property type="term" value="F:adenylylsulfate kinase activity"/>
    <property type="evidence" value="ECO:0000314"/>
    <property type="project" value="UniProtKB"/>
</dbReference>
<dbReference type="GO" id="GO:0005524">
    <property type="term" value="F:ATP binding"/>
    <property type="evidence" value="ECO:0007669"/>
    <property type="project" value="UniProtKB-KW"/>
</dbReference>
<dbReference type="GO" id="GO:0016779">
    <property type="term" value="F:nucleotidyltransferase activity"/>
    <property type="evidence" value="ECO:0000250"/>
    <property type="project" value="UniProtKB"/>
</dbReference>
<dbReference type="GO" id="GO:0042803">
    <property type="term" value="F:protein homodimerization activity"/>
    <property type="evidence" value="ECO:0000353"/>
    <property type="project" value="UniProtKB"/>
</dbReference>
<dbReference type="GO" id="GO:0004781">
    <property type="term" value="F:sulfate adenylyltransferase (ATP) activity"/>
    <property type="evidence" value="ECO:0000314"/>
    <property type="project" value="UniProtKB"/>
</dbReference>
<dbReference type="GO" id="GO:0050428">
    <property type="term" value="P:3'-phosphoadenosine 5'-phosphosulfate biosynthetic process"/>
    <property type="evidence" value="ECO:0000314"/>
    <property type="project" value="UniProtKB"/>
</dbReference>
<dbReference type="GO" id="GO:0001501">
    <property type="term" value="P:skeletal system development"/>
    <property type="evidence" value="ECO:0000304"/>
    <property type="project" value="ProtInc"/>
</dbReference>
<dbReference type="GO" id="GO:0000103">
    <property type="term" value="P:sulfate assimilation"/>
    <property type="evidence" value="ECO:0000314"/>
    <property type="project" value="UniProtKB"/>
</dbReference>
<dbReference type="CDD" id="cd02027">
    <property type="entry name" value="APSK"/>
    <property type="match status" value="1"/>
</dbReference>
<dbReference type="CDD" id="cd00517">
    <property type="entry name" value="ATPS"/>
    <property type="match status" value="1"/>
</dbReference>
<dbReference type="FunFam" id="3.40.50.300:FF:000243">
    <property type="entry name" value="Bifunctional 3'-phosphoadenosine 5'-phosphosulfate synthase 1"/>
    <property type="match status" value="1"/>
</dbReference>
<dbReference type="FunFam" id="3.10.400.10:FF:000001">
    <property type="entry name" value="bifunctional 3'-phosphoadenosine 5'-phosphosulfate synthase 1"/>
    <property type="match status" value="1"/>
</dbReference>
<dbReference type="FunFam" id="3.40.50.620:FF:000006">
    <property type="entry name" value="bifunctional 3'-phosphoadenosine 5'-phosphosulfate synthase 1"/>
    <property type="match status" value="1"/>
</dbReference>
<dbReference type="Gene3D" id="3.40.50.620">
    <property type="entry name" value="HUPs"/>
    <property type="match status" value="1"/>
</dbReference>
<dbReference type="Gene3D" id="3.40.50.300">
    <property type="entry name" value="P-loop containing nucleotide triphosphate hydrolases"/>
    <property type="match status" value="1"/>
</dbReference>
<dbReference type="Gene3D" id="3.10.400.10">
    <property type="entry name" value="Sulfate adenylyltransferase"/>
    <property type="match status" value="1"/>
</dbReference>
<dbReference type="HAMAP" id="MF_00065">
    <property type="entry name" value="Adenylyl_sulf_kinase"/>
    <property type="match status" value="1"/>
</dbReference>
<dbReference type="InterPro" id="IPR002891">
    <property type="entry name" value="APS_kinase"/>
</dbReference>
<dbReference type="InterPro" id="IPR025980">
    <property type="entry name" value="ATP-Sase_PUA-like_dom"/>
</dbReference>
<dbReference type="InterPro" id="IPR027417">
    <property type="entry name" value="P-loop_NTPase"/>
</dbReference>
<dbReference type="InterPro" id="IPR015947">
    <property type="entry name" value="PUA-like_sf"/>
</dbReference>
<dbReference type="InterPro" id="IPR014729">
    <property type="entry name" value="Rossmann-like_a/b/a_fold"/>
</dbReference>
<dbReference type="InterPro" id="IPR024951">
    <property type="entry name" value="Sulfurylase_cat_dom"/>
</dbReference>
<dbReference type="InterPro" id="IPR002650">
    <property type="entry name" value="Sulphate_adenylyltransferase"/>
</dbReference>
<dbReference type="NCBIfam" id="TIGR00455">
    <property type="entry name" value="apsK"/>
    <property type="match status" value="1"/>
</dbReference>
<dbReference type="NCBIfam" id="NF003013">
    <property type="entry name" value="PRK03846.1"/>
    <property type="match status" value="1"/>
</dbReference>
<dbReference type="NCBIfam" id="TIGR00339">
    <property type="entry name" value="sopT"/>
    <property type="match status" value="1"/>
</dbReference>
<dbReference type="PANTHER" id="PTHR11055">
    <property type="entry name" value="BIFUNCTIONAL 3'-PHOSPHOADENOSINE 5'-PHOSPHOSULFATE SYNTHASE"/>
    <property type="match status" value="1"/>
</dbReference>
<dbReference type="PANTHER" id="PTHR11055:SF17">
    <property type="entry name" value="BIFUNCTIONAL 3'-PHOSPHOADENOSINE 5'-PHOSPHOSULFATE SYNTHASE 1"/>
    <property type="match status" value="1"/>
</dbReference>
<dbReference type="Pfam" id="PF01583">
    <property type="entry name" value="APS_kinase"/>
    <property type="match status" value="1"/>
</dbReference>
<dbReference type="Pfam" id="PF01747">
    <property type="entry name" value="ATP-sulfurylase"/>
    <property type="match status" value="1"/>
</dbReference>
<dbReference type="Pfam" id="PF14306">
    <property type="entry name" value="PUA_2"/>
    <property type="match status" value="1"/>
</dbReference>
<dbReference type="SUPFAM" id="SSF52374">
    <property type="entry name" value="Nucleotidylyl transferase"/>
    <property type="match status" value="1"/>
</dbReference>
<dbReference type="SUPFAM" id="SSF52540">
    <property type="entry name" value="P-loop containing nucleoside triphosphate hydrolases"/>
    <property type="match status" value="1"/>
</dbReference>
<dbReference type="SUPFAM" id="SSF88697">
    <property type="entry name" value="PUA domain-like"/>
    <property type="match status" value="1"/>
</dbReference>
<sequence length="624" mass="70833">MEIPGSLCKKVKLSNNAQNWGMQRATNVTYQAHHVSRNKRGQVVGTRGGFRGCTVWLTGLSGAGKTTVSMALEEYLVCHGIPCYTLDGDNIRQGLNKNLGFSPEDREENVRRIAEVAKLFADAGLVCITSFISPYTQDRNNARQIHEGASLPFFEVFVDAPLHVCEQRDVKGLYKKARAGEIKGFTGIDSEYEKPEAPELVLKTDSCDVNDCVQQVVELLQERDIVPVDASYEVKELYVPENKLHLAKTDAETLPALKINKVDMQWVQVLAEGWATPLNGFMREREYLQCLHFDCLLDGGVINLSVPIVLTATHEDKERLDGCTAFALMYEGRRVAILRNPEFFEHRKEERCARQWGTTCKNHPYIKMVMEQGDWLIGGDLQVLDRVYWNDGLDQYRLTPTELKQKFKDMNADAVFAFQLRNPVHNGHALLMQDTHKQLLERGYRRPVLLLHPLGGWTKDDDVPLMWRMKQHAAVLEEGVLNPETTVVAIFPSPMMYAGPTEVQWHCRARMVAGANFYIVGRDPAGMPHPETGKDLYEPSHGAKVLTMAPGLITLEIVPFRVAAYNKKKKRMDYYDSEHHEDFEFISGTRMRKLAREGQKPPEGFMAPKAWTVLTEYYKSLEKA</sequence>
<comment type="function">
    <text evidence="3 7 8 9">Bifunctional enzyme with both ATP sulfurylase and APS kinase activity, which mediates two steps in the sulfate activation pathway. The first step is the transfer of a sulfate group to ATP to yield adenosine 5'-phosphosulfate (APS), and the second step is the transfer of a phosphate group from ATP to APS yielding 3'-phosphoadenylylsulfate (PAPS: activated sulfate donor used by sulfotransferase). In mammals, PAPS is the sole source of sulfate; APS appears to be only an intermediate in the sulfate-activation pathway (PubMed:14747722, PubMed:9576487, PubMed:9648242, PubMed:9668121). Required for normal biosynthesis of sulfated L-selectin ligands in endothelial cells (PubMed:9576487).</text>
</comment>
<comment type="catalytic activity">
    <reaction evidence="3 7 8 9">
        <text>sulfate + ATP + H(+) = adenosine 5'-phosphosulfate + diphosphate</text>
        <dbReference type="Rhea" id="RHEA:18133"/>
        <dbReference type="ChEBI" id="CHEBI:15378"/>
        <dbReference type="ChEBI" id="CHEBI:16189"/>
        <dbReference type="ChEBI" id="CHEBI:30616"/>
        <dbReference type="ChEBI" id="CHEBI:33019"/>
        <dbReference type="ChEBI" id="CHEBI:58243"/>
        <dbReference type="EC" id="2.7.7.4"/>
    </reaction>
</comment>
<comment type="catalytic activity">
    <reaction evidence="3 5 6 7 8 9">
        <text>adenosine 5'-phosphosulfate + ATP = 3'-phosphoadenylyl sulfate + ADP + H(+)</text>
        <dbReference type="Rhea" id="RHEA:24152"/>
        <dbReference type="ChEBI" id="CHEBI:15378"/>
        <dbReference type="ChEBI" id="CHEBI:30616"/>
        <dbReference type="ChEBI" id="CHEBI:58243"/>
        <dbReference type="ChEBI" id="CHEBI:58339"/>
        <dbReference type="ChEBI" id="CHEBI:456216"/>
        <dbReference type="EC" id="2.7.1.25"/>
    </reaction>
</comment>
<comment type="activity regulation">
    <text evidence="6 7">Inhibited by chlorate (PubMed:9576487). The kinase activity is subject to inhibition by the substrate adenylyl sulfate (PubMed:17540769).</text>
</comment>
<comment type="pathway">
    <text evidence="3 7 8 9">Sulfur metabolism; sulfate assimilation.</text>
</comment>
<comment type="subunit">
    <text evidence="3 4 6">Homodimer.</text>
</comment>
<comment type="interaction">
    <interactant intactId="EBI-713760">
        <id>O43252</id>
    </interactant>
    <interactant intactId="EBI-1053912">
        <id>O95340</id>
        <label>PAPSS2</label>
    </interactant>
    <organismsDiffer>false</organismsDiffer>
    <experiments>2</experiments>
</comment>
<comment type="tissue specificity">
    <text evidence="7">Expressed in testis, pancreas, kidney, thymus, prostate, ovary, small intestine, colon, leukocytes and liver. Also expressed in high endothelial venules (HEV) cells and in cartilage.</text>
</comment>
<comment type="domain">
    <text evidence="6">The N-terminal first 50 residues are required for inhibition by the substrate adenylyl sulfate.</text>
</comment>
<comment type="similarity">
    <text evidence="12">In the N-terminal section; belongs to the APS kinase family.</text>
</comment>
<comment type="similarity">
    <text evidence="12">In the C-terminal section; belongs to the sulfate adenylyltransferase family.</text>
</comment>